<proteinExistence type="evidence at protein level"/>
<evidence type="ECO:0000255" key="1"/>
<evidence type="ECO:0000255" key="2">
    <source>
        <dbReference type="PROSITE-ProRule" id="PRU00080"/>
    </source>
</evidence>
<evidence type="ECO:0000269" key="3">
    <source>
    </source>
</evidence>
<evidence type="ECO:0000305" key="4"/>
<evidence type="ECO:0000312" key="5">
    <source>
        <dbReference type="Araport" id="AT1G20940"/>
    </source>
</evidence>
<evidence type="ECO:0000312" key="6">
    <source>
        <dbReference type="EMBL" id="AAD30598.1"/>
    </source>
</evidence>
<dbReference type="EMBL" id="AC007369">
    <property type="protein sequence ID" value="AAD30598.1"/>
    <property type="molecule type" value="Genomic_DNA"/>
</dbReference>
<dbReference type="EMBL" id="CP002684">
    <property type="protein sequence ID" value="AEE30044.1"/>
    <property type="molecule type" value="Genomic_DNA"/>
</dbReference>
<dbReference type="PIR" id="C86342">
    <property type="entry name" value="C86342"/>
</dbReference>
<dbReference type="RefSeq" id="NP_173518.1">
    <property type="nucleotide sequence ID" value="NM_101947.1"/>
</dbReference>
<dbReference type="BioGRID" id="23927">
    <property type="interactions" value="1"/>
</dbReference>
<dbReference type="FunCoup" id="Q9SYP3">
    <property type="interactions" value="36"/>
</dbReference>
<dbReference type="IntAct" id="Q9SYP3">
    <property type="interactions" value="1"/>
</dbReference>
<dbReference type="STRING" id="3702.Q9SYP3"/>
<dbReference type="iPTMnet" id="Q9SYP3"/>
<dbReference type="PaxDb" id="3702-AT1G20940.1"/>
<dbReference type="EnsemblPlants" id="AT1G20940.1">
    <property type="protein sequence ID" value="AT1G20940.1"/>
    <property type="gene ID" value="AT1G20940"/>
</dbReference>
<dbReference type="GeneID" id="838688"/>
<dbReference type="Gramene" id="AT1G20940.1">
    <property type="protein sequence ID" value="AT1G20940.1"/>
    <property type="gene ID" value="AT1G20940"/>
</dbReference>
<dbReference type="KEGG" id="ath:AT1G20940"/>
<dbReference type="Araport" id="AT1G20940"/>
<dbReference type="TAIR" id="AT1G20940"/>
<dbReference type="HOGENOM" id="CLU_061894_0_0_1"/>
<dbReference type="InParanoid" id="Q9SYP3"/>
<dbReference type="OMA" id="MEANSWG"/>
<dbReference type="PhylomeDB" id="Q9SYP3"/>
<dbReference type="UniPathway" id="UPA00143"/>
<dbReference type="PRO" id="PR:Q9SYP3"/>
<dbReference type="Proteomes" id="UP000006548">
    <property type="component" value="Chromosome 1"/>
</dbReference>
<dbReference type="ExpressionAtlas" id="Q9SYP3">
    <property type="expression patterns" value="baseline and differential"/>
</dbReference>
<dbReference type="GO" id="GO:0016567">
    <property type="term" value="P:protein ubiquitination"/>
    <property type="evidence" value="ECO:0007669"/>
    <property type="project" value="UniProtKB-UniPathway"/>
</dbReference>
<dbReference type="InterPro" id="IPR036047">
    <property type="entry name" value="F-box-like_dom_sf"/>
</dbReference>
<dbReference type="InterPro" id="IPR001810">
    <property type="entry name" value="F-box_dom"/>
</dbReference>
<dbReference type="InterPro" id="IPR050796">
    <property type="entry name" value="SCF_F-box_component"/>
</dbReference>
<dbReference type="PANTHER" id="PTHR31672">
    <property type="entry name" value="BNACNNG10540D PROTEIN"/>
    <property type="match status" value="1"/>
</dbReference>
<dbReference type="Pfam" id="PF00646">
    <property type="entry name" value="F-box"/>
    <property type="match status" value="1"/>
</dbReference>
<dbReference type="SUPFAM" id="SSF81383">
    <property type="entry name" value="F-box domain"/>
    <property type="match status" value="1"/>
</dbReference>
<feature type="chain" id="PRO_0000283173" description="Putative F-box/kelch-repeat protein At1g20940">
    <location>
        <begin position="1"/>
        <end position="414"/>
    </location>
</feature>
<feature type="domain" description="F-box" evidence="2">
    <location>
        <begin position="13"/>
        <end position="65"/>
    </location>
</feature>
<feature type="repeat" description="Kelch 1" evidence="1">
    <location>
        <begin position="281"/>
        <end position="328"/>
    </location>
</feature>
<feature type="repeat" description="Kelch 2" evidence="1">
    <location>
        <begin position="331"/>
        <end position="378"/>
    </location>
</feature>
<comment type="function">
    <text evidence="4">Probable component of an E3 ubiquitin ligase complex.</text>
</comment>
<comment type="pathway">
    <text evidence="4">Protein modification; protein ubiquitination.</text>
</comment>
<comment type="subunit">
    <text evidence="3">Interacts with DEK3.</text>
</comment>
<accession>Q9SYP3</accession>
<reference key="1">
    <citation type="journal article" date="2000" name="Nature">
        <title>Sequence and analysis of chromosome 1 of the plant Arabidopsis thaliana.</title>
        <authorList>
            <person name="Theologis A."/>
            <person name="Ecker J.R."/>
            <person name="Palm C.J."/>
            <person name="Federspiel N.A."/>
            <person name="Kaul S."/>
            <person name="White O."/>
            <person name="Alonso J."/>
            <person name="Altafi H."/>
            <person name="Araujo R."/>
            <person name="Bowman C.L."/>
            <person name="Brooks S.Y."/>
            <person name="Buehler E."/>
            <person name="Chan A."/>
            <person name="Chao Q."/>
            <person name="Chen H."/>
            <person name="Cheuk R.F."/>
            <person name="Chin C.W."/>
            <person name="Chung M.K."/>
            <person name="Conn L."/>
            <person name="Conway A.B."/>
            <person name="Conway A.R."/>
            <person name="Creasy T.H."/>
            <person name="Dewar K."/>
            <person name="Dunn P."/>
            <person name="Etgu P."/>
            <person name="Feldblyum T.V."/>
            <person name="Feng J.-D."/>
            <person name="Fong B."/>
            <person name="Fujii C.Y."/>
            <person name="Gill J.E."/>
            <person name="Goldsmith A.D."/>
            <person name="Haas B."/>
            <person name="Hansen N.F."/>
            <person name="Hughes B."/>
            <person name="Huizar L."/>
            <person name="Hunter J.L."/>
            <person name="Jenkins J."/>
            <person name="Johnson-Hopson C."/>
            <person name="Khan S."/>
            <person name="Khaykin E."/>
            <person name="Kim C.J."/>
            <person name="Koo H.L."/>
            <person name="Kremenetskaia I."/>
            <person name="Kurtz D.B."/>
            <person name="Kwan A."/>
            <person name="Lam B."/>
            <person name="Langin-Hooper S."/>
            <person name="Lee A."/>
            <person name="Lee J.M."/>
            <person name="Lenz C.A."/>
            <person name="Li J.H."/>
            <person name="Li Y.-P."/>
            <person name="Lin X."/>
            <person name="Liu S.X."/>
            <person name="Liu Z.A."/>
            <person name="Luros J.S."/>
            <person name="Maiti R."/>
            <person name="Marziali A."/>
            <person name="Militscher J."/>
            <person name="Miranda M."/>
            <person name="Nguyen M."/>
            <person name="Nierman W.C."/>
            <person name="Osborne B.I."/>
            <person name="Pai G."/>
            <person name="Peterson J."/>
            <person name="Pham P.K."/>
            <person name="Rizzo M."/>
            <person name="Rooney T."/>
            <person name="Rowley D."/>
            <person name="Sakano H."/>
            <person name="Salzberg S.L."/>
            <person name="Schwartz J.R."/>
            <person name="Shinn P."/>
            <person name="Southwick A.M."/>
            <person name="Sun H."/>
            <person name="Tallon L.J."/>
            <person name="Tambunga G."/>
            <person name="Toriumi M.J."/>
            <person name="Town C.D."/>
            <person name="Utterback T."/>
            <person name="Van Aken S."/>
            <person name="Vaysberg M."/>
            <person name="Vysotskaia V.S."/>
            <person name="Walker M."/>
            <person name="Wu D."/>
            <person name="Yu G."/>
            <person name="Fraser C.M."/>
            <person name="Venter J.C."/>
            <person name="Davis R.W."/>
        </authorList>
    </citation>
    <scope>NUCLEOTIDE SEQUENCE [LARGE SCALE GENOMIC DNA]</scope>
    <source>
        <strain>cv. Columbia</strain>
    </source>
</reference>
<reference key="2">
    <citation type="journal article" date="2017" name="Plant J.">
        <title>Araport11: a complete reannotation of the Arabidopsis thaliana reference genome.</title>
        <authorList>
            <person name="Cheng C.Y."/>
            <person name="Krishnakumar V."/>
            <person name="Chan A.P."/>
            <person name="Thibaud-Nissen F."/>
            <person name="Schobel S."/>
            <person name="Town C.D."/>
        </authorList>
    </citation>
    <scope>GENOME REANNOTATION</scope>
    <source>
        <strain>cv. Columbia</strain>
    </source>
</reference>
<reference key="3">
    <citation type="journal article" date="2014" name="Plant Cell">
        <title>A DEK domain-containing protein modulates chromatin structure and function in Arabidopsis.</title>
        <authorList>
            <person name="Waidmann S."/>
            <person name="Kusenda B."/>
            <person name="Mayerhofer J."/>
            <person name="Mechtler K."/>
            <person name="Jonak C."/>
        </authorList>
    </citation>
    <scope>INTERACTION WITH DEK3</scope>
    <scope>IDENTIFICATION BY MASS SPECTROMETRY</scope>
    <source>
        <strain>cv. Columbia</strain>
    </source>
</reference>
<protein>
    <recommendedName>
        <fullName evidence="4">Putative F-box/kelch-repeat protein At1g20940</fullName>
    </recommendedName>
</protein>
<gene>
    <name evidence="5" type="ordered locus">At1g20940</name>
    <name evidence="6" type="ORF">F9H16.7</name>
</gene>
<name>FBK7_ARATH</name>
<keyword id="KW-0880">Kelch repeat</keyword>
<keyword id="KW-1185">Reference proteome</keyword>
<keyword id="KW-0677">Repeat</keyword>
<keyword id="KW-0833">Ubl conjugation pathway</keyword>
<sequence length="414" mass="46625">MNNLPRNSQFDSSSIINDLPLDLLDEILFRLEPKSMAMMRCTNNSIKSYLSDPRFGPEYPSWVRPSLFNLGSYGATYVCCHPLVSSCDYMSPGNGVELFDGSADCYIFGSCSGLLLLYIGCLFVANPLTKRFRILDHSGSKLIPMIVNGGLKGLSGISYPGGNVACTERAMCVGFAVNRNLTTKRFKIVGILEMENVYGFEINEGDSWRLSETSITTSSKSDLTTRMKPVYLDNTLHWLRNDGSIMSFNPETEQACLIPSIFHREPDTKLLFAESVKINRLTLISGTIETISVYTLVENHKWTLTRRIKNISIEEETLVYWNIAMYDGKCLVVRVKKMGLEPLASVLHVYDMEANSWGVLVSTLAWPNCVRDFYKLTPSLFFVEEDEQQKVLVASNDRRISYINSIMGLIDTTK</sequence>
<organism>
    <name type="scientific">Arabidopsis thaliana</name>
    <name type="common">Mouse-ear cress</name>
    <dbReference type="NCBI Taxonomy" id="3702"/>
    <lineage>
        <taxon>Eukaryota</taxon>
        <taxon>Viridiplantae</taxon>
        <taxon>Streptophyta</taxon>
        <taxon>Embryophyta</taxon>
        <taxon>Tracheophyta</taxon>
        <taxon>Spermatophyta</taxon>
        <taxon>Magnoliopsida</taxon>
        <taxon>eudicotyledons</taxon>
        <taxon>Gunneridae</taxon>
        <taxon>Pentapetalae</taxon>
        <taxon>rosids</taxon>
        <taxon>malvids</taxon>
        <taxon>Brassicales</taxon>
        <taxon>Brassicaceae</taxon>
        <taxon>Camelineae</taxon>
        <taxon>Arabidopsis</taxon>
    </lineage>
</organism>